<evidence type="ECO:0000255" key="1">
    <source>
        <dbReference type="HAMAP-Rule" id="MF_00318"/>
    </source>
</evidence>
<organism>
    <name type="scientific">Corynebacterium urealyticum (strain ATCC 43042 / DSM 7109)</name>
    <dbReference type="NCBI Taxonomy" id="504474"/>
    <lineage>
        <taxon>Bacteria</taxon>
        <taxon>Bacillati</taxon>
        <taxon>Actinomycetota</taxon>
        <taxon>Actinomycetes</taxon>
        <taxon>Mycobacteriales</taxon>
        <taxon>Corynebacteriaceae</taxon>
        <taxon>Corynebacterium</taxon>
    </lineage>
</organism>
<reference key="1">
    <citation type="journal article" date="2008" name="J. Biotechnol.">
        <title>The lifestyle of Corynebacterium urealyticum derived from its complete genome sequence established by pyrosequencing.</title>
        <authorList>
            <person name="Tauch A."/>
            <person name="Trost E."/>
            <person name="Tilker A."/>
            <person name="Ludewig U."/>
            <person name="Schneiker S."/>
            <person name="Goesmann A."/>
            <person name="Arnold W."/>
            <person name="Bekel T."/>
            <person name="Brinkrolf K."/>
            <person name="Brune I."/>
            <person name="Goetker S."/>
            <person name="Kalinowski J."/>
            <person name="Kamp P.-B."/>
            <person name="Lobo F.P."/>
            <person name="Viehoever P."/>
            <person name="Weisshaar B."/>
            <person name="Soriano F."/>
            <person name="Droege M."/>
            <person name="Puehler A."/>
        </authorList>
    </citation>
    <scope>NUCLEOTIDE SEQUENCE [LARGE SCALE GENOMIC DNA]</scope>
    <source>
        <strain>ATCC 43042 / DSM 7109</strain>
    </source>
</reference>
<feature type="chain" id="PRO_1000115853" description="Enolase">
    <location>
        <begin position="1"/>
        <end position="425"/>
    </location>
</feature>
<feature type="active site" description="Proton donor" evidence="1">
    <location>
        <position position="204"/>
    </location>
</feature>
<feature type="active site" description="Proton acceptor" evidence="1">
    <location>
        <position position="334"/>
    </location>
</feature>
<feature type="binding site" evidence="1">
    <location>
        <position position="162"/>
    </location>
    <ligand>
        <name>(2R)-2-phosphoglycerate</name>
        <dbReference type="ChEBI" id="CHEBI:58289"/>
    </ligand>
</feature>
<feature type="binding site" evidence="1">
    <location>
        <position position="241"/>
    </location>
    <ligand>
        <name>Mg(2+)</name>
        <dbReference type="ChEBI" id="CHEBI:18420"/>
    </ligand>
</feature>
<feature type="binding site" evidence="1">
    <location>
        <position position="282"/>
    </location>
    <ligand>
        <name>Mg(2+)</name>
        <dbReference type="ChEBI" id="CHEBI:18420"/>
    </ligand>
</feature>
<feature type="binding site" evidence="1">
    <location>
        <position position="309"/>
    </location>
    <ligand>
        <name>Mg(2+)</name>
        <dbReference type="ChEBI" id="CHEBI:18420"/>
    </ligand>
</feature>
<feature type="binding site" evidence="1">
    <location>
        <position position="334"/>
    </location>
    <ligand>
        <name>(2R)-2-phosphoglycerate</name>
        <dbReference type="ChEBI" id="CHEBI:58289"/>
    </ligand>
</feature>
<feature type="binding site" evidence="1">
    <location>
        <position position="363"/>
    </location>
    <ligand>
        <name>(2R)-2-phosphoglycerate</name>
        <dbReference type="ChEBI" id="CHEBI:58289"/>
    </ligand>
</feature>
<feature type="binding site" evidence="1">
    <location>
        <position position="364"/>
    </location>
    <ligand>
        <name>(2R)-2-phosphoglycerate</name>
        <dbReference type="ChEBI" id="CHEBI:58289"/>
    </ligand>
</feature>
<feature type="binding site" evidence="1">
    <location>
        <position position="385"/>
    </location>
    <ligand>
        <name>(2R)-2-phosphoglycerate</name>
        <dbReference type="ChEBI" id="CHEBI:58289"/>
    </ligand>
</feature>
<accession>B1VFL0</accession>
<protein>
    <recommendedName>
        <fullName evidence="1">Enolase</fullName>
        <ecNumber evidence="1">4.2.1.11</ecNumber>
    </recommendedName>
    <alternativeName>
        <fullName evidence="1">2-phospho-D-glycerate hydro-lyase</fullName>
    </alternativeName>
    <alternativeName>
        <fullName evidence="1">2-phosphoglycerate dehydratase</fullName>
    </alternativeName>
</protein>
<comment type="function">
    <text evidence="1">Catalyzes the reversible conversion of 2-phosphoglycerate (2-PG) into phosphoenolpyruvate (PEP). It is essential for the degradation of carbohydrates via glycolysis.</text>
</comment>
<comment type="catalytic activity">
    <reaction evidence="1">
        <text>(2R)-2-phosphoglycerate = phosphoenolpyruvate + H2O</text>
        <dbReference type="Rhea" id="RHEA:10164"/>
        <dbReference type="ChEBI" id="CHEBI:15377"/>
        <dbReference type="ChEBI" id="CHEBI:58289"/>
        <dbReference type="ChEBI" id="CHEBI:58702"/>
        <dbReference type="EC" id="4.2.1.11"/>
    </reaction>
</comment>
<comment type="cofactor">
    <cofactor evidence="1">
        <name>Mg(2+)</name>
        <dbReference type="ChEBI" id="CHEBI:18420"/>
    </cofactor>
    <text evidence="1">Binds a second Mg(2+) ion via substrate during catalysis.</text>
</comment>
<comment type="pathway">
    <text evidence="1">Carbohydrate degradation; glycolysis; pyruvate from D-glyceraldehyde 3-phosphate: step 4/5.</text>
</comment>
<comment type="subcellular location">
    <subcellularLocation>
        <location evidence="1">Cytoplasm</location>
    </subcellularLocation>
    <subcellularLocation>
        <location evidence="1">Secreted</location>
    </subcellularLocation>
    <subcellularLocation>
        <location evidence="1">Cell surface</location>
    </subcellularLocation>
    <text evidence="1">Fractions of enolase are present in both the cytoplasm and on the cell surface.</text>
</comment>
<comment type="similarity">
    <text evidence="1">Belongs to the enolase family.</text>
</comment>
<keyword id="KW-0963">Cytoplasm</keyword>
<keyword id="KW-0324">Glycolysis</keyword>
<keyword id="KW-0456">Lyase</keyword>
<keyword id="KW-0460">Magnesium</keyword>
<keyword id="KW-0479">Metal-binding</keyword>
<keyword id="KW-1185">Reference proteome</keyword>
<keyword id="KW-0964">Secreted</keyword>
<sequence>MAGILNVSALEIMDSRGNPTVEVEVILDDGSMGRAAVPSGASTGVHEAHELRDGGDRYLGKGVAKAVDFVNTEIDDALAGLEADDQRLIDQTLLELDGTENKSRLGANALLGVSMAVAHAAADSAGLELFRYVGGPNGHVLPVPMMNILNGGAHADSGVDVQEFMIAPIGAETFAEALQVGAEVYHSLKDVIKAKGLSTGLGDEGGFAPSVESTKAALDLIVEAIEKAGYTLGEDVALALDVASSEFYEDGVYNFEGGKHSSAEMVEVYADLVEQYPIVSIEDPLDEDDWEGYVTLTEKLGDKIQIVGDDLFVTNPSRLQEGIDRGAANALLVKVNQIGTLSETFDAVELAHRNGYRTMMSHRSGETEDTTIADLAVALNCGQIKTGAPARSERVAKYNQLLRIERYLEGAAVYAGRSAFPRFKN</sequence>
<proteinExistence type="inferred from homology"/>
<dbReference type="EC" id="4.2.1.11" evidence="1"/>
<dbReference type="EMBL" id="AM942444">
    <property type="protein sequence ID" value="CAQ04549.1"/>
    <property type="molecule type" value="Genomic_DNA"/>
</dbReference>
<dbReference type="RefSeq" id="WP_012359841.1">
    <property type="nucleotide sequence ID" value="NC_010545.1"/>
</dbReference>
<dbReference type="SMR" id="B1VFL0"/>
<dbReference type="STRING" id="504474.cu0589"/>
<dbReference type="GeneID" id="60603364"/>
<dbReference type="KEGG" id="cur:cu0589"/>
<dbReference type="eggNOG" id="COG0148">
    <property type="taxonomic scope" value="Bacteria"/>
</dbReference>
<dbReference type="HOGENOM" id="CLU_031223_2_1_11"/>
<dbReference type="UniPathway" id="UPA00109">
    <property type="reaction ID" value="UER00187"/>
</dbReference>
<dbReference type="Proteomes" id="UP000001727">
    <property type="component" value="Chromosome"/>
</dbReference>
<dbReference type="GO" id="GO:0009986">
    <property type="term" value="C:cell surface"/>
    <property type="evidence" value="ECO:0007669"/>
    <property type="project" value="UniProtKB-SubCell"/>
</dbReference>
<dbReference type="GO" id="GO:0005576">
    <property type="term" value="C:extracellular region"/>
    <property type="evidence" value="ECO:0007669"/>
    <property type="project" value="UniProtKB-SubCell"/>
</dbReference>
<dbReference type="GO" id="GO:0000015">
    <property type="term" value="C:phosphopyruvate hydratase complex"/>
    <property type="evidence" value="ECO:0007669"/>
    <property type="project" value="InterPro"/>
</dbReference>
<dbReference type="GO" id="GO:0000287">
    <property type="term" value="F:magnesium ion binding"/>
    <property type="evidence" value="ECO:0007669"/>
    <property type="project" value="UniProtKB-UniRule"/>
</dbReference>
<dbReference type="GO" id="GO:0004634">
    <property type="term" value="F:phosphopyruvate hydratase activity"/>
    <property type="evidence" value="ECO:0007669"/>
    <property type="project" value="UniProtKB-UniRule"/>
</dbReference>
<dbReference type="GO" id="GO:0006096">
    <property type="term" value="P:glycolytic process"/>
    <property type="evidence" value="ECO:0007669"/>
    <property type="project" value="UniProtKB-UniRule"/>
</dbReference>
<dbReference type="CDD" id="cd03313">
    <property type="entry name" value="enolase"/>
    <property type="match status" value="1"/>
</dbReference>
<dbReference type="FunFam" id="3.20.20.120:FF:000001">
    <property type="entry name" value="Enolase"/>
    <property type="match status" value="1"/>
</dbReference>
<dbReference type="FunFam" id="3.30.390.10:FF:000001">
    <property type="entry name" value="Enolase"/>
    <property type="match status" value="1"/>
</dbReference>
<dbReference type="Gene3D" id="3.20.20.120">
    <property type="entry name" value="Enolase-like C-terminal domain"/>
    <property type="match status" value="1"/>
</dbReference>
<dbReference type="Gene3D" id="3.30.390.10">
    <property type="entry name" value="Enolase-like, N-terminal domain"/>
    <property type="match status" value="1"/>
</dbReference>
<dbReference type="HAMAP" id="MF_00318">
    <property type="entry name" value="Enolase"/>
    <property type="match status" value="1"/>
</dbReference>
<dbReference type="InterPro" id="IPR000941">
    <property type="entry name" value="Enolase"/>
</dbReference>
<dbReference type="InterPro" id="IPR036849">
    <property type="entry name" value="Enolase-like_C_sf"/>
</dbReference>
<dbReference type="InterPro" id="IPR029017">
    <property type="entry name" value="Enolase-like_N"/>
</dbReference>
<dbReference type="InterPro" id="IPR020810">
    <property type="entry name" value="Enolase_C"/>
</dbReference>
<dbReference type="InterPro" id="IPR020809">
    <property type="entry name" value="Enolase_CS"/>
</dbReference>
<dbReference type="InterPro" id="IPR020811">
    <property type="entry name" value="Enolase_N"/>
</dbReference>
<dbReference type="NCBIfam" id="TIGR01060">
    <property type="entry name" value="eno"/>
    <property type="match status" value="1"/>
</dbReference>
<dbReference type="PANTHER" id="PTHR11902">
    <property type="entry name" value="ENOLASE"/>
    <property type="match status" value="1"/>
</dbReference>
<dbReference type="PANTHER" id="PTHR11902:SF1">
    <property type="entry name" value="ENOLASE"/>
    <property type="match status" value="1"/>
</dbReference>
<dbReference type="Pfam" id="PF00113">
    <property type="entry name" value="Enolase_C"/>
    <property type="match status" value="1"/>
</dbReference>
<dbReference type="Pfam" id="PF03952">
    <property type="entry name" value="Enolase_N"/>
    <property type="match status" value="1"/>
</dbReference>
<dbReference type="PIRSF" id="PIRSF001400">
    <property type="entry name" value="Enolase"/>
    <property type="match status" value="1"/>
</dbReference>
<dbReference type="PRINTS" id="PR00148">
    <property type="entry name" value="ENOLASE"/>
</dbReference>
<dbReference type="SFLD" id="SFLDS00001">
    <property type="entry name" value="Enolase"/>
    <property type="match status" value="1"/>
</dbReference>
<dbReference type="SFLD" id="SFLDF00002">
    <property type="entry name" value="enolase"/>
    <property type="match status" value="1"/>
</dbReference>
<dbReference type="SMART" id="SM01192">
    <property type="entry name" value="Enolase_C"/>
    <property type="match status" value="1"/>
</dbReference>
<dbReference type="SMART" id="SM01193">
    <property type="entry name" value="Enolase_N"/>
    <property type="match status" value="1"/>
</dbReference>
<dbReference type="SUPFAM" id="SSF51604">
    <property type="entry name" value="Enolase C-terminal domain-like"/>
    <property type="match status" value="1"/>
</dbReference>
<dbReference type="SUPFAM" id="SSF54826">
    <property type="entry name" value="Enolase N-terminal domain-like"/>
    <property type="match status" value="1"/>
</dbReference>
<dbReference type="PROSITE" id="PS00164">
    <property type="entry name" value="ENOLASE"/>
    <property type="match status" value="1"/>
</dbReference>
<gene>
    <name evidence="1" type="primary">eno</name>
    <name type="ordered locus">cu0589</name>
</gene>
<name>ENO_CORU7</name>